<keyword id="KW-0963">Cytoplasm</keyword>
<keyword id="KW-0342">GTP-binding</keyword>
<keyword id="KW-0378">Hydrolase</keyword>
<keyword id="KW-0460">Magnesium</keyword>
<keyword id="KW-0479">Metal-binding</keyword>
<keyword id="KW-0547">Nucleotide-binding</keyword>
<keyword id="KW-0630">Potassium</keyword>
<keyword id="KW-0819">tRNA processing</keyword>
<organism>
    <name type="scientific">Wolbachia pipientis subsp. Culex pipiens (strain wPip)</name>
    <dbReference type="NCBI Taxonomy" id="570417"/>
    <lineage>
        <taxon>Bacteria</taxon>
        <taxon>Pseudomonadati</taxon>
        <taxon>Pseudomonadota</taxon>
        <taxon>Alphaproteobacteria</taxon>
        <taxon>Rickettsiales</taxon>
        <taxon>Anaplasmataceae</taxon>
        <taxon>Wolbachieae</taxon>
        <taxon>Wolbachia</taxon>
    </lineage>
</organism>
<comment type="function">
    <text evidence="1">Exhibits a very high intrinsic GTPase hydrolysis rate. Involved in the addition of a carboxymethylaminomethyl (cmnm) group at the wobble position (U34) of certain tRNAs, forming tRNA-cmnm(5)s(2)U34.</text>
</comment>
<comment type="cofactor">
    <cofactor evidence="1">
        <name>K(+)</name>
        <dbReference type="ChEBI" id="CHEBI:29103"/>
    </cofactor>
    <text evidence="1">Binds 1 potassium ion per subunit.</text>
</comment>
<comment type="subunit">
    <text evidence="1">Homodimer. Heterotetramer of two MnmE and two MnmG subunits.</text>
</comment>
<comment type="subcellular location">
    <subcellularLocation>
        <location evidence="1">Cytoplasm</location>
    </subcellularLocation>
</comment>
<comment type="similarity">
    <text evidence="1">Belongs to the TRAFAC class TrmE-Era-EngA-EngB-Septin-like GTPase superfamily. TrmE GTPase family.</text>
</comment>
<feature type="chain" id="PRO_1000122117" description="tRNA modification GTPase MnmE">
    <location>
        <begin position="1"/>
        <end position="442"/>
    </location>
</feature>
<feature type="domain" description="TrmE-type G">
    <location>
        <begin position="217"/>
        <end position="367"/>
    </location>
</feature>
<feature type="binding site" evidence="1">
    <location>
        <position position="24"/>
    </location>
    <ligand>
        <name>(6S)-5-formyl-5,6,7,8-tetrahydrofolate</name>
        <dbReference type="ChEBI" id="CHEBI:57457"/>
    </ligand>
</feature>
<feature type="binding site" evidence="1">
    <location>
        <position position="82"/>
    </location>
    <ligand>
        <name>(6S)-5-formyl-5,6,7,8-tetrahydrofolate</name>
        <dbReference type="ChEBI" id="CHEBI:57457"/>
    </ligand>
</feature>
<feature type="binding site" evidence="1">
    <location>
        <position position="120"/>
    </location>
    <ligand>
        <name>(6S)-5-formyl-5,6,7,8-tetrahydrofolate</name>
        <dbReference type="ChEBI" id="CHEBI:57457"/>
    </ligand>
</feature>
<feature type="binding site" evidence="1">
    <location>
        <begin position="227"/>
        <end position="232"/>
    </location>
    <ligand>
        <name>GTP</name>
        <dbReference type="ChEBI" id="CHEBI:37565"/>
    </ligand>
</feature>
<feature type="binding site" evidence="1">
    <location>
        <position position="231"/>
    </location>
    <ligand>
        <name>Mg(2+)</name>
        <dbReference type="ChEBI" id="CHEBI:18420"/>
    </ligand>
</feature>
<feature type="binding site" evidence="1">
    <location>
        <begin position="246"/>
        <end position="252"/>
    </location>
    <ligand>
        <name>GTP</name>
        <dbReference type="ChEBI" id="CHEBI:37565"/>
    </ligand>
</feature>
<feature type="binding site" evidence="1">
    <location>
        <position position="246"/>
    </location>
    <ligand>
        <name>K(+)</name>
        <dbReference type="ChEBI" id="CHEBI:29103"/>
    </ligand>
</feature>
<feature type="binding site" evidence="1">
    <location>
        <position position="252"/>
    </location>
    <ligand>
        <name>Mg(2+)</name>
        <dbReference type="ChEBI" id="CHEBI:18420"/>
    </ligand>
</feature>
<feature type="binding site" evidence="1">
    <location>
        <begin position="271"/>
        <end position="274"/>
    </location>
    <ligand>
        <name>GTP</name>
        <dbReference type="ChEBI" id="CHEBI:37565"/>
    </ligand>
</feature>
<feature type="binding site" evidence="1">
    <location>
        <position position="442"/>
    </location>
    <ligand>
        <name>(6S)-5-formyl-5,6,7,8-tetrahydrofolate</name>
        <dbReference type="ChEBI" id="CHEBI:57457"/>
    </ligand>
</feature>
<protein>
    <recommendedName>
        <fullName evidence="1">tRNA modification GTPase MnmE</fullName>
        <ecNumber evidence="1">3.6.-.-</ecNumber>
    </recommendedName>
</protein>
<dbReference type="EC" id="3.6.-.-" evidence="1"/>
<dbReference type="EMBL" id="AM999887">
    <property type="protein sequence ID" value="CAQ55117.1"/>
    <property type="molecule type" value="Genomic_DNA"/>
</dbReference>
<dbReference type="RefSeq" id="WP_007302394.1">
    <property type="nucleotide sequence ID" value="NC_010981.1"/>
</dbReference>
<dbReference type="SMR" id="B3CMJ7"/>
<dbReference type="KEGG" id="wpi:WP1009"/>
<dbReference type="eggNOG" id="COG0486">
    <property type="taxonomic scope" value="Bacteria"/>
</dbReference>
<dbReference type="HOGENOM" id="CLU_019624_3_1_5"/>
<dbReference type="Proteomes" id="UP000008814">
    <property type="component" value="Chromosome"/>
</dbReference>
<dbReference type="GO" id="GO:0005737">
    <property type="term" value="C:cytoplasm"/>
    <property type="evidence" value="ECO:0007669"/>
    <property type="project" value="UniProtKB-SubCell"/>
</dbReference>
<dbReference type="GO" id="GO:0005525">
    <property type="term" value="F:GTP binding"/>
    <property type="evidence" value="ECO:0007669"/>
    <property type="project" value="UniProtKB-UniRule"/>
</dbReference>
<dbReference type="GO" id="GO:0003924">
    <property type="term" value="F:GTPase activity"/>
    <property type="evidence" value="ECO:0007669"/>
    <property type="project" value="UniProtKB-UniRule"/>
</dbReference>
<dbReference type="GO" id="GO:0046872">
    <property type="term" value="F:metal ion binding"/>
    <property type="evidence" value="ECO:0007669"/>
    <property type="project" value="UniProtKB-KW"/>
</dbReference>
<dbReference type="GO" id="GO:0030488">
    <property type="term" value="P:tRNA methylation"/>
    <property type="evidence" value="ECO:0007669"/>
    <property type="project" value="TreeGrafter"/>
</dbReference>
<dbReference type="GO" id="GO:0002098">
    <property type="term" value="P:tRNA wobble uridine modification"/>
    <property type="evidence" value="ECO:0007669"/>
    <property type="project" value="TreeGrafter"/>
</dbReference>
<dbReference type="CDD" id="cd04164">
    <property type="entry name" value="trmE"/>
    <property type="match status" value="1"/>
</dbReference>
<dbReference type="CDD" id="cd14858">
    <property type="entry name" value="TrmE_N"/>
    <property type="match status" value="1"/>
</dbReference>
<dbReference type="FunFam" id="3.30.1360.120:FF:000007">
    <property type="entry name" value="tRNA modification GTPase GTPBP3, mitochondrial"/>
    <property type="match status" value="1"/>
</dbReference>
<dbReference type="Gene3D" id="3.40.50.300">
    <property type="entry name" value="P-loop containing nucleotide triphosphate hydrolases"/>
    <property type="match status" value="1"/>
</dbReference>
<dbReference type="Gene3D" id="3.30.1360.120">
    <property type="entry name" value="Probable tRNA modification gtpase trme, domain 1"/>
    <property type="match status" value="1"/>
</dbReference>
<dbReference type="Gene3D" id="1.20.120.430">
    <property type="entry name" value="tRNA modification GTPase MnmE domain 2"/>
    <property type="match status" value="1"/>
</dbReference>
<dbReference type="HAMAP" id="MF_00379">
    <property type="entry name" value="GTPase_MnmE"/>
    <property type="match status" value="1"/>
</dbReference>
<dbReference type="InterPro" id="IPR031168">
    <property type="entry name" value="G_TrmE"/>
</dbReference>
<dbReference type="InterPro" id="IPR006073">
    <property type="entry name" value="GTP-bd"/>
</dbReference>
<dbReference type="InterPro" id="IPR018948">
    <property type="entry name" value="GTP-bd_TrmE_N"/>
</dbReference>
<dbReference type="InterPro" id="IPR004520">
    <property type="entry name" value="GTPase_MnmE"/>
</dbReference>
<dbReference type="InterPro" id="IPR027368">
    <property type="entry name" value="MnmE_dom2"/>
</dbReference>
<dbReference type="InterPro" id="IPR025867">
    <property type="entry name" value="MnmE_helical"/>
</dbReference>
<dbReference type="InterPro" id="IPR027417">
    <property type="entry name" value="P-loop_NTPase"/>
</dbReference>
<dbReference type="InterPro" id="IPR005225">
    <property type="entry name" value="Small_GTP-bd"/>
</dbReference>
<dbReference type="InterPro" id="IPR027266">
    <property type="entry name" value="TrmE/GcvT_dom1"/>
</dbReference>
<dbReference type="NCBIfam" id="TIGR00450">
    <property type="entry name" value="mnmE_trmE_thdF"/>
    <property type="match status" value="1"/>
</dbReference>
<dbReference type="NCBIfam" id="NF003661">
    <property type="entry name" value="PRK05291.1-3"/>
    <property type="match status" value="1"/>
</dbReference>
<dbReference type="NCBIfam" id="TIGR00231">
    <property type="entry name" value="small_GTP"/>
    <property type="match status" value="1"/>
</dbReference>
<dbReference type="PANTHER" id="PTHR42714">
    <property type="entry name" value="TRNA MODIFICATION GTPASE GTPBP3"/>
    <property type="match status" value="1"/>
</dbReference>
<dbReference type="PANTHER" id="PTHR42714:SF2">
    <property type="entry name" value="TRNA MODIFICATION GTPASE GTPBP3, MITOCHONDRIAL"/>
    <property type="match status" value="1"/>
</dbReference>
<dbReference type="Pfam" id="PF01926">
    <property type="entry name" value="MMR_HSR1"/>
    <property type="match status" value="1"/>
</dbReference>
<dbReference type="Pfam" id="PF12631">
    <property type="entry name" value="MnmE_helical"/>
    <property type="match status" value="1"/>
</dbReference>
<dbReference type="Pfam" id="PF10396">
    <property type="entry name" value="TrmE_N"/>
    <property type="match status" value="1"/>
</dbReference>
<dbReference type="SUPFAM" id="SSF52540">
    <property type="entry name" value="P-loop containing nucleoside triphosphate hydrolases"/>
    <property type="match status" value="1"/>
</dbReference>
<dbReference type="SUPFAM" id="SSF116878">
    <property type="entry name" value="TrmE connector domain"/>
    <property type="match status" value="1"/>
</dbReference>
<dbReference type="PROSITE" id="PS51709">
    <property type="entry name" value="G_TRME"/>
    <property type="match status" value="1"/>
</dbReference>
<reference key="1">
    <citation type="journal article" date="2008" name="Mol. Biol. Evol.">
        <title>Genome evolution of Wolbachia strain wPip from the Culex pipiens group.</title>
        <authorList>
            <person name="Klasson L."/>
            <person name="Walker T."/>
            <person name="Sebaihia M."/>
            <person name="Sanders M.J."/>
            <person name="Quail M.A."/>
            <person name="Lord A."/>
            <person name="Sanders S."/>
            <person name="Earl J."/>
            <person name="O'Neill S.L."/>
            <person name="Thomson N."/>
            <person name="Sinkins S.P."/>
            <person name="Parkhill J."/>
        </authorList>
    </citation>
    <scope>NUCLEOTIDE SEQUENCE [LARGE SCALE GENOMIC DNA]</scope>
    <source>
        <strain>wPip</strain>
    </source>
</reference>
<name>MNME_WOLPP</name>
<evidence type="ECO:0000255" key="1">
    <source>
        <dbReference type="HAMAP-Rule" id="MF_00379"/>
    </source>
</evidence>
<gene>
    <name evidence="1" type="primary">mnmE</name>
    <name evidence="1" type="synonym">trmE</name>
    <name type="ordered locus">WP1009</name>
</gene>
<proteinExistence type="inferred from homology"/>
<sequence>MTNTNETIFALSTVFGKSGVAVIRISGNYTLKALNHFHIKKKIKPRFATLVDLYDDSNQLIDNGIIIYFPAPNSFTGEDVIELQVHGSKAVIKIILEKLSKIFVMARPGEFSLRAFLNGKFDLTQIEGIADLIDAETKMQAKQAIKQISGELERLYSNWRQRLITIQSKIEAYIDFPEDIWAEKSELEKINNEVQSLVQLIQEHLNDNRRGERLREGLHIVITGEPNVGKSTLFNFLAKRDIAIVSEYAGTTRDILEAHIDIGGYPIILSDTAGIRESSDPIESEGISRAKKRSFEADLRIELFPFEQRHNINCNVVNSDTIYVLSKADDAINDRNILIGGVDFLPISILKGIGTNKLISLIKKKAEEKFGHDRDTPVITRQRHRSHMQKALEHLQRFKIDNPIELISEDLRLAAFELGAVIGIINVEEILDSVFSSFCVGK</sequence>
<accession>B3CMJ7</accession>